<accession>C1DI57</accession>
<name>Y294_AZOVD</name>
<organism>
    <name type="scientific">Azotobacter vinelandii (strain DJ / ATCC BAA-1303)</name>
    <dbReference type="NCBI Taxonomy" id="322710"/>
    <lineage>
        <taxon>Bacteria</taxon>
        <taxon>Pseudomonadati</taxon>
        <taxon>Pseudomonadota</taxon>
        <taxon>Gammaproteobacteria</taxon>
        <taxon>Pseudomonadales</taxon>
        <taxon>Pseudomonadaceae</taxon>
        <taxon>Azotobacter</taxon>
    </lineage>
</organism>
<feature type="chain" id="PRO_1000201873" description="UPF0758 protein Avin_02940">
    <location>
        <begin position="1"/>
        <end position="224"/>
    </location>
</feature>
<feature type="domain" description="MPN" evidence="1">
    <location>
        <begin position="102"/>
        <end position="224"/>
    </location>
</feature>
<feature type="short sequence motif" description="JAMM motif" evidence="1">
    <location>
        <begin position="173"/>
        <end position="186"/>
    </location>
</feature>
<feature type="binding site" evidence="1">
    <location>
        <position position="173"/>
    </location>
    <ligand>
        <name>Zn(2+)</name>
        <dbReference type="ChEBI" id="CHEBI:29105"/>
        <note>catalytic</note>
    </ligand>
</feature>
<feature type="binding site" evidence="1">
    <location>
        <position position="175"/>
    </location>
    <ligand>
        <name>Zn(2+)</name>
        <dbReference type="ChEBI" id="CHEBI:29105"/>
        <note>catalytic</note>
    </ligand>
</feature>
<feature type="binding site" evidence="1">
    <location>
        <position position="186"/>
    </location>
    <ligand>
        <name>Zn(2+)</name>
        <dbReference type="ChEBI" id="CHEBI:29105"/>
        <note>catalytic</note>
    </ligand>
</feature>
<protein>
    <recommendedName>
        <fullName>UPF0758 protein Avin_02940</fullName>
    </recommendedName>
</protein>
<comment type="similarity">
    <text evidence="2">Belongs to the UPF0758 family.</text>
</comment>
<reference key="1">
    <citation type="journal article" date="2009" name="J. Bacteriol.">
        <title>Genome sequence of Azotobacter vinelandii, an obligate aerobe specialized to support diverse anaerobic metabolic processes.</title>
        <authorList>
            <person name="Setubal J.C."/>
            <person name="Dos Santos P."/>
            <person name="Goldman B.S."/>
            <person name="Ertesvaag H."/>
            <person name="Espin G."/>
            <person name="Rubio L.M."/>
            <person name="Valla S."/>
            <person name="Almeida N.F."/>
            <person name="Balasubramanian D."/>
            <person name="Cromes L."/>
            <person name="Curatti L."/>
            <person name="Du Z."/>
            <person name="Godsy E."/>
            <person name="Goodner B."/>
            <person name="Hellner-Burris K."/>
            <person name="Hernandez J.A."/>
            <person name="Houmiel K."/>
            <person name="Imperial J."/>
            <person name="Kennedy C."/>
            <person name="Larson T.J."/>
            <person name="Latreille P."/>
            <person name="Ligon L.S."/>
            <person name="Lu J."/>
            <person name="Maerk M."/>
            <person name="Miller N.M."/>
            <person name="Norton S."/>
            <person name="O'Carroll I.P."/>
            <person name="Paulsen I."/>
            <person name="Raulfs E.C."/>
            <person name="Roemer R."/>
            <person name="Rosser J."/>
            <person name="Segura D."/>
            <person name="Slater S."/>
            <person name="Stricklin S.L."/>
            <person name="Studholme D.J."/>
            <person name="Sun J."/>
            <person name="Viana C.J."/>
            <person name="Wallin E."/>
            <person name="Wang B."/>
            <person name="Wheeler C."/>
            <person name="Zhu H."/>
            <person name="Dean D.R."/>
            <person name="Dixon R."/>
            <person name="Wood D."/>
        </authorList>
    </citation>
    <scope>NUCLEOTIDE SEQUENCE [LARGE SCALE GENOMIC DNA]</scope>
    <source>
        <strain>DJ / ATCC BAA-1303</strain>
    </source>
</reference>
<gene>
    <name type="ordered locus">Avin_02940</name>
</gene>
<sequence length="224" mass="24786">MGIRDWPAAERPREKLLEQGASALSDAELLAIFLRTGVAGQTAVDLARHLLNDFGGLRALLEADRAAFSRRLGLGPAKFAQLQAVLEMSRRHLAERLRRDPALESPQAVRDYLKARLRHEPHEVFGCLFLDAKHRVLAFEVLFQGTVDGASVYPRQVLKRALAHNAAALILTHNHPSGIAEPSQADFSLTRRLKEALALVDVRVLDHFIVGDGEPLSMAEQGWL</sequence>
<proteinExistence type="inferred from homology"/>
<dbReference type="EMBL" id="CP001157">
    <property type="protein sequence ID" value="ACO76554.1"/>
    <property type="molecule type" value="Genomic_DNA"/>
</dbReference>
<dbReference type="RefSeq" id="WP_012698982.1">
    <property type="nucleotide sequence ID" value="NC_012560.1"/>
</dbReference>
<dbReference type="SMR" id="C1DI57"/>
<dbReference type="STRING" id="322710.Avin_02940"/>
<dbReference type="EnsemblBacteria" id="ACO76554">
    <property type="protein sequence ID" value="ACO76554"/>
    <property type="gene ID" value="Avin_02940"/>
</dbReference>
<dbReference type="GeneID" id="88183747"/>
<dbReference type="KEGG" id="avn:Avin_02940"/>
<dbReference type="eggNOG" id="COG2003">
    <property type="taxonomic scope" value="Bacteria"/>
</dbReference>
<dbReference type="HOGENOM" id="CLU_073529_0_1_6"/>
<dbReference type="OrthoDB" id="9804482at2"/>
<dbReference type="Proteomes" id="UP000002424">
    <property type="component" value="Chromosome"/>
</dbReference>
<dbReference type="GO" id="GO:0046872">
    <property type="term" value="F:metal ion binding"/>
    <property type="evidence" value="ECO:0007669"/>
    <property type="project" value="UniProtKB-KW"/>
</dbReference>
<dbReference type="GO" id="GO:0008237">
    <property type="term" value="F:metallopeptidase activity"/>
    <property type="evidence" value="ECO:0007669"/>
    <property type="project" value="UniProtKB-KW"/>
</dbReference>
<dbReference type="GO" id="GO:0006508">
    <property type="term" value="P:proteolysis"/>
    <property type="evidence" value="ECO:0007669"/>
    <property type="project" value="UniProtKB-KW"/>
</dbReference>
<dbReference type="CDD" id="cd08071">
    <property type="entry name" value="MPN_DUF2466"/>
    <property type="match status" value="1"/>
</dbReference>
<dbReference type="FunFam" id="3.40.140.10:FF:000032">
    <property type="entry name" value="DNA repair protein RadC"/>
    <property type="match status" value="1"/>
</dbReference>
<dbReference type="Gene3D" id="3.40.140.10">
    <property type="entry name" value="Cytidine Deaminase, domain 2"/>
    <property type="match status" value="1"/>
</dbReference>
<dbReference type="InterPro" id="IPR037518">
    <property type="entry name" value="MPN"/>
</dbReference>
<dbReference type="InterPro" id="IPR025657">
    <property type="entry name" value="RadC_JAB"/>
</dbReference>
<dbReference type="InterPro" id="IPR010994">
    <property type="entry name" value="RuvA_2-like"/>
</dbReference>
<dbReference type="InterPro" id="IPR001405">
    <property type="entry name" value="UPF0758"/>
</dbReference>
<dbReference type="InterPro" id="IPR020891">
    <property type="entry name" value="UPF0758_CS"/>
</dbReference>
<dbReference type="InterPro" id="IPR046778">
    <property type="entry name" value="UPF0758_N"/>
</dbReference>
<dbReference type="NCBIfam" id="NF000642">
    <property type="entry name" value="PRK00024.1"/>
    <property type="match status" value="1"/>
</dbReference>
<dbReference type="NCBIfam" id="TIGR00608">
    <property type="entry name" value="radc"/>
    <property type="match status" value="1"/>
</dbReference>
<dbReference type="PANTHER" id="PTHR30471">
    <property type="entry name" value="DNA REPAIR PROTEIN RADC"/>
    <property type="match status" value="1"/>
</dbReference>
<dbReference type="PANTHER" id="PTHR30471:SF3">
    <property type="entry name" value="UPF0758 PROTEIN YEES-RELATED"/>
    <property type="match status" value="1"/>
</dbReference>
<dbReference type="Pfam" id="PF04002">
    <property type="entry name" value="RadC"/>
    <property type="match status" value="1"/>
</dbReference>
<dbReference type="Pfam" id="PF20582">
    <property type="entry name" value="UPF0758_N"/>
    <property type="match status" value="1"/>
</dbReference>
<dbReference type="SUPFAM" id="SSF102712">
    <property type="entry name" value="JAB1/MPN domain"/>
    <property type="match status" value="1"/>
</dbReference>
<dbReference type="SUPFAM" id="SSF47781">
    <property type="entry name" value="RuvA domain 2-like"/>
    <property type="match status" value="1"/>
</dbReference>
<dbReference type="PROSITE" id="PS50249">
    <property type="entry name" value="MPN"/>
    <property type="match status" value="1"/>
</dbReference>
<dbReference type="PROSITE" id="PS01302">
    <property type="entry name" value="UPF0758"/>
    <property type="match status" value="1"/>
</dbReference>
<keyword id="KW-0378">Hydrolase</keyword>
<keyword id="KW-0479">Metal-binding</keyword>
<keyword id="KW-0482">Metalloprotease</keyword>
<keyword id="KW-0645">Protease</keyword>
<keyword id="KW-0862">Zinc</keyword>
<evidence type="ECO:0000255" key="1">
    <source>
        <dbReference type="PROSITE-ProRule" id="PRU01182"/>
    </source>
</evidence>
<evidence type="ECO:0000305" key="2"/>